<sequence>MQKGIRLNDGHVASLGLLARKDGTRKGYLSKRSSDNTKWQTKWFALLQNLLFYFESDSSSRPSGLYLLEGCVCDRAPSPKPALSAKEPLEKQHYFTVNFSHENQKALELRTEDAKDCDEWVAAIAHASYRTLATEHEALMQKYLHLLQIVETEKTVAKQLRQQIEDGEIEIERLKAEITSLLKDNERIQSTQTVAPNDEDSDIKKIKKVQSFLRGWLCRRKWKTIIQDYIRSPHADSMRKRNQVVFSMLEAEAEYVQQLHILVNNFLRPLRMAASSKKPPITHDDVSSIFLNSETIMFLHQIFYQGLKARISSWPTLVLADLFDILLPMLNIYQEFVRNHQYSLQILAHCKQNRDFDKLLKHYEAKPDCEERTLETFLTYPMFQIPRYILTLHELLAHTPHEHVERNSLDYAKSKLEELSRIMHDEVSETENIRKNLAIERMIIEGCEILLDTSQTFVRQGSLIQVPMSEKGKITRGRLGSLSLKKEGERQCFLFSKHLIICTRGSGGKLHLTKNGVISLIDCTLLEEPESTEEEAKGSGQDIDHLDFKIGVEPKDSPPFTVILVASSRQEKAAWTSDISQCVDNIRCNGLMMNAFEENSKVTVPQMIKRTREGTREAEMSRSDASLYCDDVDIRFSKTMNSCKVLQIRYASVERLLERLTDLRFLSIDFLNTFLHSYRVFTTAIVVLDKLITIYKKPISAIPARWLRSLELLFASGQNNKLLYGEPPKSPRATRKFSSPPPLSITKTSSPSRRRKLSLNIPIITGGKALDLAALSCNSNGYTSMYSAMSPFSKATLDTSKLYVSSSFTNKIPDEGDTTPEKPEDPSALSKQSSEVSMREESDIDQNQSDDGDTETSPTKSPTTPKSVKNKNSSEFPLFSYNNGVVMTSCRELDNNRSALSAASAFAIATAGANEGTPNKEKYRRMSLASAGFPPDQRNGDKEFVIRRAATNRVLNVLRHWVSKHSQDFETNDELKCKVIGFLEEVMHDPELLTQERKAAANIIRTLTQEDPGDNQITLEEITQMAEGVKAEPFENHSALEIAEQLTLLDHLVFKKIPYEEFFGQGWMKLEKNERTPYIMKTTKHFNDISNLIASEIIRNEDINARVSAIEKWVAVADICRCLHNYNAVLEITSSMNRSAIFRLKKTWLKVSKQTKALIDKLQKLVSSEGRFKNLREALKNCDPPCVPYLGMYLTDLAFIEEGTPNYTEDGLVNFSKMRMISHIIREIRQFQQTAYKIEHQAKVTQYLLDQSFVMDEESLYESSLRIEPKLPT</sequence>
<protein>
    <recommendedName>
        <fullName>Ras-specific guanine nucleotide-releasing factor 1</fullName>
        <shortName>Ras-GRF1</shortName>
    </recommendedName>
    <alternativeName>
        <fullName>Guanine nucleotide-releasing protein</fullName>
        <shortName>GNRP</shortName>
    </alternativeName>
    <alternativeName>
        <fullName>Ras-specific nucleotide exchange factor CDC25</fullName>
    </alternativeName>
</protein>
<gene>
    <name type="primary">RASGRF1</name>
    <name type="synonym">CDC25</name>
    <name type="synonym">GNRP</name>
    <name type="synonym">GRF1</name>
</gene>
<dbReference type="EMBL" id="L26584">
    <property type="protein sequence ID" value="AAA58417.1"/>
    <property type="molecule type" value="mRNA"/>
</dbReference>
<dbReference type="EMBL" id="S62035">
    <property type="protein sequence ID" value="AAB26881.1"/>
    <property type="molecule type" value="mRNA"/>
</dbReference>
<dbReference type="EMBL" id="AC011944">
    <property type="status" value="NOT_ANNOTATED_CDS"/>
    <property type="molecule type" value="Genomic_DNA"/>
</dbReference>
<dbReference type="EMBL" id="AC104231">
    <property type="status" value="NOT_ANNOTATED_CDS"/>
    <property type="molecule type" value="Genomic_DNA"/>
</dbReference>
<dbReference type="EMBL" id="CH471136">
    <property type="protein sequence ID" value="EAW99141.1"/>
    <property type="molecule type" value="Genomic_DNA"/>
</dbReference>
<dbReference type="EMBL" id="AK226101">
    <property type="status" value="NOT_ANNOTATED_CDS"/>
    <property type="molecule type" value="mRNA"/>
</dbReference>
<dbReference type="EMBL" id="M91815">
    <property type="status" value="NOT_ANNOTATED_CDS"/>
    <property type="molecule type" value="mRNA"/>
</dbReference>
<dbReference type="CCDS" id="CCDS10309.1">
    <molecule id="Q13972-1"/>
</dbReference>
<dbReference type="CCDS" id="CCDS42065.1">
    <molecule id="Q13972-2"/>
</dbReference>
<dbReference type="CCDS" id="CCDS45320.1">
    <molecule id="Q13972-3"/>
</dbReference>
<dbReference type="PIR" id="A38985">
    <property type="entry name" value="A38985"/>
</dbReference>
<dbReference type="RefSeq" id="NP_001139120.1">
    <molecule id="Q13972-3"/>
    <property type="nucleotide sequence ID" value="NM_001145648.3"/>
</dbReference>
<dbReference type="RefSeq" id="NP_002882.3">
    <molecule id="Q13972-1"/>
    <property type="nucleotide sequence ID" value="NM_002891.4"/>
</dbReference>
<dbReference type="RefSeq" id="NP_722522.1">
    <molecule id="Q13972-2"/>
    <property type="nucleotide sequence ID" value="NM_153815.3"/>
</dbReference>
<dbReference type="RefSeq" id="XP_047288882.1">
    <molecule id="Q13972-2"/>
    <property type="nucleotide sequence ID" value="XM_047432926.1"/>
</dbReference>
<dbReference type="SMR" id="Q13972"/>
<dbReference type="BioGRID" id="111858">
    <property type="interactions" value="15"/>
</dbReference>
<dbReference type="CORUM" id="Q13972"/>
<dbReference type="FunCoup" id="Q13972">
    <property type="interactions" value="1123"/>
</dbReference>
<dbReference type="IntAct" id="Q13972">
    <property type="interactions" value="8"/>
</dbReference>
<dbReference type="MINT" id="Q13972"/>
<dbReference type="STRING" id="9606.ENSP00000405963"/>
<dbReference type="ChEMBL" id="CHEMBL5468"/>
<dbReference type="GlyConnect" id="2067">
    <property type="glycosylation" value="1 N-Linked glycan (1 site)"/>
</dbReference>
<dbReference type="GlyCosmos" id="Q13972">
    <property type="glycosylation" value="1 site, 2 glycans"/>
</dbReference>
<dbReference type="GlyGen" id="Q13972">
    <property type="glycosylation" value="1 site, 2 N-linked glycans (1 site)"/>
</dbReference>
<dbReference type="iPTMnet" id="Q13972"/>
<dbReference type="PhosphoSitePlus" id="Q13972"/>
<dbReference type="BioMuta" id="RASGRF1"/>
<dbReference type="DMDM" id="13124259"/>
<dbReference type="CPTAC" id="non-CPTAC-5436"/>
<dbReference type="CPTAC" id="non-CPTAC-5437"/>
<dbReference type="CPTAC" id="non-CPTAC-5438"/>
<dbReference type="jPOST" id="Q13972"/>
<dbReference type="MassIVE" id="Q13972"/>
<dbReference type="PaxDb" id="9606-ENSP00000405963"/>
<dbReference type="PeptideAtlas" id="Q13972"/>
<dbReference type="ProteomicsDB" id="28264"/>
<dbReference type="ProteomicsDB" id="59779">
    <molecule id="Q13972-1"/>
</dbReference>
<dbReference type="ProteomicsDB" id="59780">
    <molecule id="Q13972-2"/>
</dbReference>
<dbReference type="Antibodypedia" id="4170">
    <property type="antibodies" value="323 antibodies from 33 providers"/>
</dbReference>
<dbReference type="DNASU" id="5923"/>
<dbReference type="Ensembl" id="ENST00000394745.3">
    <molecule id="Q13972-2"/>
    <property type="protein sequence ID" value="ENSP00000378228.3"/>
    <property type="gene ID" value="ENSG00000058335.16"/>
</dbReference>
<dbReference type="Ensembl" id="ENST00000419573.7">
    <molecule id="Q13972-1"/>
    <property type="protein sequence ID" value="ENSP00000405963.3"/>
    <property type="gene ID" value="ENSG00000058335.16"/>
</dbReference>
<dbReference type="Ensembl" id="ENST00000558480.7">
    <molecule id="Q13972-3"/>
    <property type="protein sequence ID" value="ENSP00000452781.2"/>
    <property type="gene ID" value="ENSG00000058335.16"/>
</dbReference>
<dbReference type="GeneID" id="5923"/>
<dbReference type="KEGG" id="hsa:5923"/>
<dbReference type="MANE-Select" id="ENST00000558480.7">
    <molecule id="Q13972-3"/>
    <property type="protein sequence ID" value="ENSP00000452781.2"/>
    <property type="RefSeq nucleotide sequence ID" value="NM_001145648.3"/>
    <property type="RefSeq protein sequence ID" value="NP_001139120.1"/>
</dbReference>
<dbReference type="UCSC" id="uc002beo.4">
    <molecule id="Q13972-1"/>
    <property type="organism name" value="human"/>
</dbReference>
<dbReference type="AGR" id="HGNC:9875"/>
<dbReference type="CTD" id="5923"/>
<dbReference type="DisGeNET" id="5923"/>
<dbReference type="GeneCards" id="RASGRF1"/>
<dbReference type="HGNC" id="HGNC:9875">
    <property type="gene designation" value="RASGRF1"/>
</dbReference>
<dbReference type="HPA" id="ENSG00000058335">
    <property type="expression patterns" value="Tissue enriched (brain)"/>
</dbReference>
<dbReference type="MIM" id="606600">
    <property type="type" value="gene"/>
</dbReference>
<dbReference type="neXtProt" id="NX_Q13972"/>
<dbReference type="OpenTargets" id="ENSG00000058335"/>
<dbReference type="PharmGKB" id="PA34238"/>
<dbReference type="VEuPathDB" id="HostDB:ENSG00000058335"/>
<dbReference type="eggNOG" id="KOG3417">
    <property type="taxonomic scope" value="Eukaryota"/>
</dbReference>
<dbReference type="GeneTree" id="ENSGT00940000157599"/>
<dbReference type="HOGENOM" id="CLU_003405_0_1_1"/>
<dbReference type="InParanoid" id="Q13972"/>
<dbReference type="OMA" id="SCNTNGY"/>
<dbReference type="OrthoDB" id="10254377at2759"/>
<dbReference type="PAN-GO" id="Q13972">
    <property type="GO annotations" value="4 GO annotations based on evolutionary models"/>
</dbReference>
<dbReference type="PhylomeDB" id="Q13972"/>
<dbReference type="TreeFam" id="TF317296"/>
<dbReference type="PathwayCommons" id="Q13972"/>
<dbReference type="Reactome" id="R-HSA-442982">
    <property type="pathway name" value="Ras activation upon Ca2+ influx through NMDA receptor"/>
</dbReference>
<dbReference type="Reactome" id="R-HSA-5673001">
    <property type="pathway name" value="RAF/MAP kinase cascade"/>
</dbReference>
<dbReference type="SignaLink" id="Q13972"/>
<dbReference type="SIGNOR" id="Q13972"/>
<dbReference type="BioGRID-ORCS" id="5923">
    <property type="hits" value="9 hits in 1150 CRISPR screens"/>
</dbReference>
<dbReference type="ChiTaRS" id="RASGRF1">
    <property type="organism name" value="human"/>
</dbReference>
<dbReference type="GenomeRNAi" id="5923"/>
<dbReference type="Pharos" id="Q13972">
    <property type="development level" value="Tbio"/>
</dbReference>
<dbReference type="PRO" id="PR:Q13972"/>
<dbReference type="Proteomes" id="UP000005640">
    <property type="component" value="Chromosome 15"/>
</dbReference>
<dbReference type="RNAct" id="Q13972">
    <property type="molecule type" value="protein"/>
</dbReference>
<dbReference type="Bgee" id="ENSG00000058335">
    <property type="expression patterns" value="Expressed in C1 segment of cervical spinal cord and 118 other cell types or tissues"/>
</dbReference>
<dbReference type="GO" id="GO:0005829">
    <property type="term" value="C:cytosol"/>
    <property type="evidence" value="ECO:0000250"/>
    <property type="project" value="HGNC-UCL"/>
</dbReference>
<dbReference type="GO" id="GO:0030426">
    <property type="term" value="C:growth cone"/>
    <property type="evidence" value="ECO:0000250"/>
    <property type="project" value="HGNC-UCL"/>
</dbReference>
<dbReference type="GO" id="GO:0043005">
    <property type="term" value="C:neuron projection"/>
    <property type="evidence" value="ECO:0000303"/>
    <property type="project" value="UniProtKB"/>
</dbReference>
<dbReference type="GO" id="GO:0005886">
    <property type="term" value="C:plasma membrane"/>
    <property type="evidence" value="ECO:0000318"/>
    <property type="project" value="GO_Central"/>
</dbReference>
<dbReference type="GO" id="GO:0035254">
    <property type="term" value="F:glutamate receptor binding"/>
    <property type="evidence" value="ECO:0007669"/>
    <property type="project" value="Ensembl"/>
</dbReference>
<dbReference type="GO" id="GO:0005085">
    <property type="term" value="F:guanyl-nucleotide exchange factor activity"/>
    <property type="evidence" value="ECO:0000315"/>
    <property type="project" value="BHF-UCL"/>
</dbReference>
<dbReference type="GO" id="GO:0007616">
    <property type="term" value="P:long-term memory"/>
    <property type="evidence" value="ECO:0000303"/>
    <property type="project" value="UniProtKB"/>
</dbReference>
<dbReference type="GO" id="GO:0043409">
    <property type="term" value="P:negative regulation of MAPK cascade"/>
    <property type="evidence" value="ECO:0000250"/>
    <property type="project" value="HGNC-UCL"/>
</dbReference>
<dbReference type="GO" id="GO:0031175">
    <property type="term" value="P:neuron projection development"/>
    <property type="evidence" value="ECO:0000250"/>
    <property type="project" value="HGNC-UCL"/>
</dbReference>
<dbReference type="GO" id="GO:0043410">
    <property type="term" value="P:positive regulation of MAPK cascade"/>
    <property type="evidence" value="ECO:0000250"/>
    <property type="project" value="HGNC-UCL"/>
</dbReference>
<dbReference type="GO" id="GO:0035022">
    <property type="term" value="P:positive regulation of Rac protein signal transduction"/>
    <property type="evidence" value="ECO:0000250"/>
    <property type="project" value="HGNC-UCL"/>
</dbReference>
<dbReference type="GO" id="GO:0046579">
    <property type="term" value="P:positive regulation of Ras protein signal transduction"/>
    <property type="evidence" value="ECO:0000250"/>
    <property type="project" value="UniProtKB"/>
</dbReference>
<dbReference type="GO" id="GO:0007265">
    <property type="term" value="P:Ras protein signal transduction"/>
    <property type="evidence" value="ECO:0000318"/>
    <property type="project" value="GO_Central"/>
</dbReference>
<dbReference type="GO" id="GO:0048168">
    <property type="term" value="P:regulation of neuronal synaptic plasticity"/>
    <property type="evidence" value="ECO:0007669"/>
    <property type="project" value="Ensembl"/>
</dbReference>
<dbReference type="GO" id="GO:0046578">
    <property type="term" value="P:regulation of Ras protein signal transduction"/>
    <property type="evidence" value="ECO:0000250"/>
    <property type="project" value="HGNC-UCL"/>
</dbReference>
<dbReference type="GO" id="GO:0048167">
    <property type="term" value="P:regulation of synaptic plasticity"/>
    <property type="evidence" value="ECO:0000250"/>
    <property type="project" value="UniProtKB"/>
</dbReference>
<dbReference type="GO" id="GO:0034976">
    <property type="term" value="P:response to endoplasmic reticulum stress"/>
    <property type="evidence" value="ECO:0000315"/>
    <property type="project" value="BHF-UCL"/>
</dbReference>
<dbReference type="GO" id="GO:0007165">
    <property type="term" value="P:signal transduction"/>
    <property type="evidence" value="ECO:0000304"/>
    <property type="project" value="ProtInc"/>
</dbReference>
<dbReference type="GO" id="GO:0044342">
    <property type="term" value="P:type B pancreatic cell proliferation"/>
    <property type="evidence" value="ECO:0007669"/>
    <property type="project" value="Ensembl"/>
</dbReference>
<dbReference type="CDD" id="cd13261">
    <property type="entry name" value="PH_RasGRF1_2"/>
    <property type="match status" value="1"/>
</dbReference>
<dbReference type="CDD" id="cd00155">
    <property type="entry name" value="RasGEF"/>
    <property type="match status" value="1"/>
</dbReference>
<dbReference type="CDD" id="cd06224">
    <property type="entry name" value="REM"/>
    <property type="match status" value="1"/>
</dbReference>
<dbReference type="CDD" id="cd00160">
    <property type="entry name" value="RhoGEF"/>
    <property type="match status" value="1"/>
</dbReference>
<dbReference type="FunFam" id="1.20.870.10:FF:000004">
    <property type="entry name" value="Ras-specific guanine nucleotide-releasing factor 1 isoform 2"/>
    <property type="match status" value="1"/>
</dbReference>
<dbReference type="FunFam" id="1.20.900.10:FF:000005">
    <property type="entry name" value="Ras-specific guanine nucleotide-releasing factor 1 isoform 2"/>
    <property type="match status" value="1"/>
</dbReference>
<dbReference type="FunFam" id="1.20.870.10:FF:000006">
    <property type="entry name" value="ras-specific guanine nucleotide-releasing factor 1 isoform X1"/>
    <property type="match status" value="1"/>
</dbReference>
<dbReference type="FunFam" id="2.30.29.30:FF:000117">
    <property type="entry name" value="ras-specific guanine nucleotide-releasing factor 1 isoform X2"/>
    <property type="match status" value="1"/>
</dbReference>
<dbReference type="FunFam" id="2.30.29.30:FF:000176">
    <property type="entry name" value="ras-specific guanine nucleotide-releasing factor 1 isoform X2"/>
    <property type="match status" value="1"/>
</dbReference>
<dbReference type="FunFam" id="1.10.840.10:FF:000004">
    <property type="entry name" value="ras-specific guanine nucleotide-releasing factor 2 isoform X1"/>
    <property type="match status" value="1"/>
</dbReference>
<dbReference type="Gene3D" id="1.20.900.10">
    <property type="entry name" value="Dbl homology (DH) domain"/>
    <property type="match status" value="1"/>
</dbReference>
<dbReference type="Gene3D" id="2.30.29.30">
    <property type="entry name" value="Pleckstrin-homology domain (PH domain)/Phosphotyrosine-binding domain (PTB)"/>
    <property type="match status" value="2"/>
</dbReference>
<dbReference type="Gene3D" id="1.10.840.10">
    <property type="entry name" value="Ras guanine-nucleotide exchange factors catalytic domain"/>
    <property type="match status" value="1"/>
</dbReference>
<dbReference type="Gene3D" id="1.20.870.10">
    <property type="entry name" value="Son of sevenless (SoS) protein Chain: S domain 1"/>
    <property type="match status" value="2"/>
</dbReference>
<dbReference type="InterPro" id="IPR035899">
    <property type="entry name" value="DBL_dom_sf"/>
</dbReference>
<dbReference type="InterPro" id="IPR000219">
    <property type="entry name" value="DH_dom"/>
</dbReference>
<dbReference type="InterPro" id="IPR001331">
    <property type="entry name" value="GDS_CDC24_CS"/>
</dbReference>
<dbReference type="InterPro" id="IPR011993">
    <property type="entry name" value="PH-like_dom_sf"/>
</dbReference>
<dbReference type="InterPro" id="IPR001849">
    <property type="entry name" value="PH_domain"/>
</dbReference>
<dbReference type="InterPro" id="IPR008937">
    <property type="entry name" value="Ras-like_GEF"/>
</dbReference>
<dbReference type="InterPro" id="IPR000651">
    <property type="entry name" value="Ras-like_Gua-exchang_fac_N"/>
</dbReference>
<dbReference type="InterPro" id="IPR019804">
    <property type="entry name" value="Ras_G-nucl-exch_fac_CS"/>
</dbReference>
<dbReference type="InterPro" id="IPR023578">
    <property type="entry name" value="Ras_GEF_dom_sf"/>
</dbReference>
<dbReference type="InterPro" id="IPR001895">
    <property type="entry name" value="RASGEF_cat_dom"/>
</dbReference>
<dbReference type="InterPro" id="IPR036964">
    <property type="entry name" value="RASGEF_cat_dom_sf"/>
</dbReference>
<dbReference type="PANTHER" id="PTHR23113">
    <property type="entry name" value="GUANINE NUCLEOTIDE EXCHANGE FACTOR"/>
    <property type="match status" value="1"/>
</dbReference>
<dbReference type="PANTHER" id="PTHR23113:SF193">
    <property type="entry name" value="RAS-SPECIFIC GUANINE NUCLEOTIDE-RELEASING FACTOR 1"/>
    <property type="match status" value="1"/>
</dbReference>
<dbReference type="Pfam" id="PF00169">
    <property type="entry name" value="PH"/>
    <property type="match status" value="2"/>
</dbReference>
<dbReference type="Pfam" id="PF00617">
    <property type="entry name" value="RasGEF"/>
    <property type="match status" value="1"/>
</dbReference>
<dbReference type="Pfam" id="PF00618">
    <property type="entry name" value="RasGEF_N"/>
    <property type="match status" value="1"/>
</dbReference>
<dbReference type="Pfam" id="PF00621">
    <property type="entry name" value="RhoGEF"/>
    <property type="match status" value="1"/>
</dbReference>
<dbReference type="SMART" id="SM00233">
    <property type="entry name" value="PH"/>
    <property type="match status" value="2"/>
</dbReference>
<dbReference type="SMART" id="SM00147">
    <property type="entry name" value="RasGEF"/>
    <property type="match status" value="1"/>
</dbReference>
<dbReference type="SMART" id="SM00229">
    <property type="entry name" value="RasGEFN"/>
    <property type="match status" value="2"/>
</dbReference>
<dbReference type="SMART" id="SM00325">
    <property type="entry name" value="RhoGEF"/>
    <property type="match status" value="1"/>
</dbReference>
<dbReference type="SUPFAM" id="SSF48065">
    <property type="entry name" value="DBL homology domain (DH-domain)"/>
    <property type="match status" value="1"/>
</dbReference>
<dbReference type="SUPFAM" id="SSF50729">
    <property type="entry name" value="PH domain-like"/>
    <property type="match status" value="2"/>
</dbReference>
<dbReference type="SUPFAM" id="SSF48366">
    <property type="entry name" value="Ras GEF"/>
    <property type="match status" value="1"/>
</dbReference>
<dbReference type="PROSITE" id="PS00741">
    <property type="entry name" value="DH_1"/>
    <property type="match status" value="1"/>
</dbReference>
<dbReference type="PROSITE" id="PS50010">
    <property type="entry name" value="DH_2"/>
    <property type="match status" value="1"/>
</dbReference>
<dbReference type="PROSITE" id="PS50096">
    <property type="entry name" value="IQ"/>
    <property type="match status" value="1"/>
</dbReference>
<dbReference type="PROSITE" id="PS50003">
    <property type="entry name" value="PH_DOMAIN"/>
    <property type="match status" value="2"/>
</dbReference>
<dbReference type="PROSITE" id="PS00720">
    <property type="entry name" value="RASGEF"/>
    <property type="match status" value="1"/>
</dbReference>
<dbReference type="PROSITE" id="PS50009">
    <property type="entry name" value="RASGEF_CAT"/>
    <property type="match status" value="1"/>
</dbReference>
<dbReference type="PROSITE" id="PS50212">
    <property type="entry name" value="RASGEF_NTER"/>
    <property type="match status" value="1"/>
</dbReference>
<keyword id="KW-0025">Alternative splicing</keyword>
<keyword id="KW-0344">Guanine-nucleotide releasing factor</keyword>
<keyword id="KW-0597">Phosphoprotein</keyword>
<keyword id="KW-1267">Proteomics identification</keyword>
<keyword id="KW-1185">Reference proteome</keyword>
<keyword id="KW-0677">Repeat</keyword>
<keyword id="KW-0832">Ubl conjugation</keyword>
<accession>Q13972</accession>
<accession>F8VPA5</accession>
<accession>H0YKF2</accession>
<accession>J3KQP9</accession>
<accession>Q16027</accession>
<name>RGRF1_HUMAN</name>
<proteinExistence type="evidence at protein level"/>
<evidence type="ECO:0000250" key="1"/>
<evidence type="ECO:0000250" key="2">
    <source>
        <dbReference type="UniProtKB" id="P27671"/>
    </source>
</evidence>
<evidence type="ECO:0000250" key="3">
    <source>
        <dbReference type="UniProtKB" id="P28818"/>
    </source>
</evidence>
<evidence type="ECO:0000255" key="4">
    <source>
        <dbReference type="PROSITE-ProRule" id="PRU00062"/>
    </source>
</evidence>
<evidence type="ECO:0000255" key="5">
    <source>
        <dbReference type="PROSITE-ProRule" id="PRU00116"/>
    </source>
</evidence>
<evidence type="ECO:0000255" key="6">
    <source>
        <dbReference type="PROSITE-ProRule" id="PRU00135"/>
    </source>
</evidence>
<evidence type="ECO:0000255" key="7">
    <source>
        <dbReference type="PROSITE-ProRule" id="PRU00145"/>
    </source>
</evidence>
<evidence type="ECO:0000255" key="8">
    <source>
        <dbReference type="PROSITE-ProRule" id="PRU00168"/>
    </source>
</evidence>
<evidence type="ECO:0000256" key="9">
    <source>
        <dbReference type="SAM" id="MobiDB-lite"/>
    </source>
</evidence>
<evidence type="ECO:0000269" key="10">
    <source>
    </source>
</evidence>
<evidence type="ECO:0000303" key="11">
    <source>
    </source>
</evidence>
<evidence type="ECO:0000303" key="12">
    <source>
    </source>
</evidence>
<evidence type="ECO:0000305" key="13"/>
<reference key="1">
    <citation type="journal article" date="1994" name="Gene">
        <title>Cloning and analysis of human cDNAs encoding a 140-kDa brain guanine nucleotide-exchange factor, Cdc25GEF, which regulates the function of Ras.</title>
        <authorList>
            <person name="Wei W."/>
            <person name="Das B."/>
            <person name="Park W."/>
            <person name="Broek D."/>
        </authorList>
    </citation>
    <scope>NUCLEOTIDE SEQUENCE [MRNA] (ISOFORM 1)</scope>
</reference>
<reference key="2">
    <citation type="journal article" date="1993" name="Oncogene">
        <title>Identification of a human guanine nucleotide-releasing factor (H-GRF55) specific for Ras proteins.</title>
        <authorList>
            <person name="Schweighoffer F."/>
            <person name="Faure M."/>
            <person name="Fath I."/>
            <person name="Chevallier-Multon M.C."/>
            <person name="Apiou F."/>
            <person name="Dutrillaux B."/>
            <person name="Sturani E."/>
            <person name="Jacquet M."/>
            <person name="Tocque B."/>
        </authorList>
    </citation>
    <scope>NUCLEOTIDE SEQUENCE [MRNA] (ISOFORM 2)</scope>
</reference>
<reference key="3">
    <citation type="journal article" date="2006" name="Nature">
        <title>Analysis of the DNA sequence and duplication history of human chromosome 15.</title>
        <authorList>
            <person name="Zody M.C."/>
            <person name="Garber M."/>
            <person name="Sharpe T."/>
            <person name="Young S.K."/>
            <person name="Rowen L."/>
            <person name="O'Neill K."/>
            <person name="Whittaker C.A."/>
            <person name="Kamal M."/>
            <person name="Chang J.L."/>
            <person name="Cuomo C.A."/>
            <person name="Dewar K."/>
            <person name="FitzGerald M.G."/>
            <person name="Kodira C.D."/>
            <person name="Madan A."/>
            <person name="Qin S."/>
            <person name="Yang X."/>
            <person name="Abbasi N."/>
            <person name="Abouelleil A."/>
            <person name="Arachchi H.M."/>
            <person name="Baradarani L."/>
            <person name="Birditt B."/>
            <person name="Bloom S."/>
            <person name="Bloom T."/>
            <person name="Borowsky M.L."/>
            <person name="Burke J."/>
            <person name="Butler J."/>
            <person name="Cook A."/>
            <person name="DeArellano K."/>
            <person name="DeCaprio D."/>
            <person name="Dorris L. III"/>
            <person name="Dors M."/>
            <person name="Eichler E.E."/>
            <person name="Engels R."/>
            <person name="Fahey J."/>
            <person name="Fleetwood P."/>
            <person name="Friedman C."/>
            <person name="Gearin G."/>
            <person name="Hall J.L."/>
            <person name="Hensley G."/>
            <person name="Johnson E."/>
            <person name="Jones C."/>
            <person name="Kamat A."/>
            <person name="Kaur A."/>
            <person name="Locke D.P."/>
            <person name="Madan A."/>
            <person name="Munson G."/>
            <person name="Jaffe D.B."/>
            <person name="Lui A."/>
            <person name="Macdonald P."/>
            <person name="Mauceli E."/>
            <person name="Naylor J.W."/>
            <person name="Nesbitt R."/>
            <person name="Nicol R."/>
            <person name="O'Leary S.B."/>
            <person name="Ratcliffe A."/>
            <person name="Rounsley S."/>
            <person name="She X."/>
            <person name="Sneddon K.M.B."/>
            <person name="Stewart S."/>
            <person name="Sougnez C."/>
            <person name="Stone S.M."/>
            <person name="Topham K."/>
            <person name="Vincent D."/>
            <person name="Wang S."/>
            <person name="Zimmer A.R."/>
            <person name="Birren B.W."/>
            <person name="Hood L."/>
            <person name="Lander E.S."/>
            <person name="Nusbaum C."/>
        </authorList>
    </citation>
    <scope>NUCLEOTIDE SEQUENCE [LARGE SCALE GENOMIC DNA]</scope>
</reference>
<reference key="4">
    <citation type="submission" date="2005-09" db="EMBL/GenBank/DDBJ databases">
        <authorList>
            <person name="Mural R.J."/>
            <person name="Istrail S."/>
            <person name="Sutton G.G."/>
            <person name="Florea L."/>
            <person name="Halpern A.L."/>
            <person name="Mobarry C.M."/>
            <person name="Lippert R."/>
            <person name="Walenz B."/>
            <person name="Shatkay H."/>
            <person name="Dew I."/>
            <person name="Miller J.R."/>
            <person name="Flanigan M.J."/>
            <person name="Edwards N.J."/>
            <person name="Bolanos R."/>
            <person name="Fasulo D."/>
            <person name="Halldorsson B.V."/>
            <person name="Hannenhalli S."/>
            <person name="Turner R."/>
            <person name="Yooseph S."/>
            <person name="Lu F."/>
            <person name="Nusskern D.R."/>
            <person name="Shue B.C."/>
            <person name="Zheng X.H."/>
            <person name="Zhong F."/>
            <person name="Delcher A.L."/>
            <person name="Huson D.H."/>
            <person name="Kravitz S.A."/>
            <person name="Mouchard L."/>
            <person name="Reinert K."/>
            <person name="Remington K.A."/>
            <person name="Clark A.G."/>
            <person name="Waterman M.S."/>
            <person name="Eichler E.E."/>
            <person name="Adams M.D."/>
            <person name="Hunkapiller M.W."/>
            <person name="Myers E.W."/>
            <person name="Venter J.C."/>
        </authorList>
    </citation>
    <scope>NUCLEOTIDE SEQUENCE [LARGE SCALE GENOMIC DNA]</scope>
</reference>
<reference key="5">
    <citation type="journal article" date="2004" name="Nat. Genet.">
        <title>Complete sequencing and characterization of 21,243 full-length human cDNAs.</title>
        <authorList>
            <person name="Ota T."/>
            <person name="Suzuki Y."/>
            <person name="Nishikawa T."/>
            <person name="Otsuki T."/>
            <person name="Sugiyama T."/>
            <person name="Irie R."/>
            <person name="Wakamatsu A."/>
            <person name="Hayashi K."/>
            <person name="Sato H."/>
            <person name="Nagai K."/>
            <person name="Kimura K."/>
            <person name="Makita H."/>
            <person name="Sekine M."/>
            <person name="Obayashi M."/>
            <person name="Nishi T."/>
            <person name="Shibahara T."/>
            <person name="Tanaka T."/>
            <person name="Ishii S."/>
            <person name="Yamamoto J."/>
            <person name="Saito K."/>
            <person name="Kawai Y."/>
            <person name="Isono Y."/>
            <person name="Nakamura Y."/>
            <person name="Nagahari K."/>
            <person name="Murakami K."/>
            <person name="Yasuda T."/>
            <person name="Iwayanagi T."/>
            <person name="Wagatsuma M."/>
            <person name="Shiratori A."/>
            <person name="Sudo H."/>
            <person name="Hosoiri T."/>
            <person name="Kaku Y."/>
            <person name="Kodaira H."/>
            <person name="Kondo H."/>
            <person name="Sugawara M."/>
            <person name="Takahashi M."/>
            <person name="Kanda K."/>
            <person name="Yokoi T."/>
            <person name="Furuya T."/>
            <person name="Kikkawa E."/>
            <person name="Omura Y."/>
            <person name="Abe K."/>
            <person name="Kamihara K."/>
            <person name="Katsuta N."/>
            <person name="Sato K."/>
            <person name="Tanikawa M."/>
            <person name="Yamazaki M."/>
            <person name="Ninomiya K."/>
            <person name="Ishibashi T."/>
            <person name="Yamashita H."/>
            <person name="Murakawa K."/>
            <person name="Fujimori K."/>
            <person name="Tanai H."/>
            <person name="Kimata M."/>
            <person name="Watanabe M."/>
            <person name="Hiraoka S."/>
            <person name="Chiba Y."/>
            <person name="Ishida S."/>
            <person name="Ono Y."/>
            <person name="Takiguchi S."/>
            <person name="Watanabe S."/>
            <person name="Yosida M."/>
            <person name="Hotuta T."/>
            <person name="Kusano J."/>
            <person name="Kanehori K."/>
            <person name="Takahashi-Fujii A."/>
            <person name="Hara H."/>
            <person name="Tanase T.-O."/>
            <person name="Nomura Y."/>
            <person name="Togiya S."/>
            <person name="Komai F."/>
            <person name="Hara R."/>
            <person name="Takeuchi K."/>
            <person name="Arita M."/>
            <person name="Imose N."/>
            <person name="Musashino K."/>
            <person name="Yuuki H."/>
            <person name="Oshima A."/>
            <person name="Sasaki N."/>
            <person name="Aotsuka S."/>
            <person name="Yoshikawa Y."/>
            <person name="Matsunawa H."/>
            <person name="Ichihara T."/>
            <person name="Shiohata N."/>
            <person name="Sano S."/>
            <person name="Moriya S."/>
            <person name="Momiyama H."/>
            <person name="Satoh N."/>
            <person name="Takami S."/>
            <person name="Terashima Y."/>
            <person name="Suzuki O."/>
            <person name="Nakagawa S."/>
            <person name="Senoh A."/>
            <person name="Mizoguchi H."/>
            <person name="Goto Y."/>
            <person name="Shimizu F."/>
            <person name="Wakebe H."/>
            <person name="Hishigaki H."/>
            <person name="Watanabe T."/>
            <person name="Sugiyama A."/>
            <person name="Takemoto M."/>
            <person name="Kawakami B."/>
            <person name="Yamazaki M."/>
            <person name="Watanabe K."/>
            <person name="Kumagai A."/>
            <person name="Itakura S."/>
            <person name="Fukuzumi Y."/>
            <person name="Fujimori Y."/>
            <person name="Komiyama M."/>
            <person name="Tashiro H."/>
            <person name="Tanigami A."/>
            <person name="Fujiwara T."/>
            <person name="Ono T."/>
            <person name="Yamada K."/>
            <person name="Fujii Y."/>
            <person name="Ozaki K."/>
            <person name="Hirao M."/>
            <person name="Ohmori Y."/>
            <person name="Kawabata A."/>
            <person name="Hikiji T."/>
            <person name="Kobatake N."/>
            <person name="Inagaki H."/>
            <person name="Ikema Y."/>
            <person name="Okamoto S."/>
            <person name="Okitani R."/>
            <person name="Kawakami T."/>
            <person name="Noguchi S."/>
            <person name="Itoh T."/>
            <person name="Shigeta K."/>
            <person name="Senba T."/>
            <person name="Matsumura K."/>
            <person name="Nakajima Y."/>
            <person name="Mizuno T."/>
            <person name="Morinaga M."/>
            <person name="Sasaki M."/>
            <person name="Togashi T."/>
            <person name="Oyama M."/>
            <person name="Hata H."/>
            <person name="Watanabe M."/>
            <person name="Komatsu T."/>
            <person name="Mizushima-Sugano J."/>
            <person name="Satoh T."/>
            <person name="Shirai Y."/>
            <person name="Takahashi Y."/>
            <person name="Nakagawa K."/>
            <person name="Okumura K."/>
            <person name="Nagase T."/>
            <person name="Nomura N."/>
            <person name="Kikuchi H."/>
            <person name="Masuho Y."/>
            <person name="Yamashita R."/>
            <person name="Nakai K."/>
            <person name="Yada T."/>
            <person name="Nakamura Y."/>
            <person name="Ohara O."/>
            <person name="Isogai T."/>
            <person name="Sugano S."/>
        </authorList>
    </citation>
    <scope>NUCLEOTIDE SEQUENCE [LARGE SCALE MRNA] OF 115-1273 (ISOFORM 3)</scope>
    <source>
        <tissue>Brain</tissue>
    </source>
</reference>
<reference key="6">
    <citation type="journal article" date="1992" name="Proc. Natl. Acad. Sci. U.S.A.">
        <title>Identification of a mammalian gene structurally and functionally related to the CDC25 gene of Saccharomyces cerevisiae.</title>
        <authorList>
            <person name="Wei W."/>
            <person name="Mosteller R.D."/>
            <person name="Sanyal P."/>
            <person name="Gonzales E."/>
            <person name="McKinney D."/>
            <person name="Dasgupta C."/>
            <person name="Li P."/>
            <person name="Liu B.-X."/>
            <person name="Broek D."/>
        </authorList>
    </citation>
    <scope>NUCLEOTIDE SEQUENCE [MRNA] OF 1045-1273 (ISOFORM 1)</scope>
</reference>
<reference key="7">
    <citation type="journal article" date="1999" name="Mol. Cell. Biol.">
        <title>Ras-specific exchange factor GRF: oligomerization through its Dbl homology domain and calcium-dependent activation of Raf.</title>
        <authorList>
            <person name="Anborgh P.H."/>
            <person name="Qian X."/>
            <person name="Papageorge A.G."/>
            <person name="Vass W.C."/>
            <person name="DeClue J.E."/>
            <person name="Lowy D.R."/>
        </authorList>
    </citation>
    <scope>OLIGOMERIZATION</scope>
    <scope>INTERACTION WITH RASGRF2</scope>
</reference>
<reference key="8">
    <citation type="journal article" date="2001" name="Eur. J. Biochem.">
        <title>Differential actions of p60c-Src and Lck kinases on the Ras regulators p120-GAP and GDP/GTP exchange factor CDC25Mm.</title>
        <authorList>
            <person name="Giglione C."/>
            <person name="Gonfloni S."/>
            <person name="Parmeggiani A."/>
        </authorList>
    </citation>
    <scope>PHOSPHORYLATION</scope>
    <scope>FUNCTION</scope>
</reference>
<comment type="function">
    <text evidence="10">Promotes the exchange of Ras-bound GDP by GTP.</text>
</comment>
<comment type="subunit">
    <text evidence="1">Homooligomer and heterooligomer with RASGRF2. Interacts with USP8, thereby regulating its stability (By similarity).</text>
</comment>
<comment type="alternative products">
    <event type="alternative splicing"/>
    <isoform>
        <id>Q13972-1</id>
        <name>1</name>
        <sequence type="displayed"/>
    </isoform>
    <isoform>
        <id>Q13972-2</id>
        <name>2</name>
        <sequence type="described" ref="VSP_012032"/>
    </isoform>
    <isoform>
        <id>Q13972-3</id>
        <name>3</name>
        <sequence type="described" ref="VSP_054072 VSP_054073"/>
    </isoform>
</comment>
<comment type="domain">
    <text>The DH (DBL-homology) domain mediates interaction with RASGRF2.</text>
</comment>
<comment type="PTM">
    <text evidence="1">Phosphorylated by PLK2, leading to ubiquitination and degradation by the proteasome.</text>
</comment>
<comment type="PTM">
    <text evidence="1">Ubiquitinated and degraded following phosphorylation by PLK2.</text>
</comment>
<comment type="PTM">
    <text evidence="10">Phosphorylated by SRC and LCK. Phosphorylation by LCK increases its capacity to stimulate the GDP/GTP exchange on Ras, whereas its phosphorylation by SRC seems not to have an effect on stimulation activity.</text>
</comment>
<comment type="online information" name="Atlas of Genetics and Cytogenetics in Oncology and Haematology">
    <link uri="https://atlasgeneticsoncology.org/gene/43453/RASGRF1"/>
</comment>
<organism>
    <name type="scientific">Homo sapiens</name>
    <name type="common">Human</name>
    <dbReference type="NCBI Taxonomy" id="9606"/>
    <lineage>
        <taxon>Eukaryota</taxon>
        <taxon>Metazoa</taxon>
        <taxon>Chordata</taxon>
        <taxon>Craniata</taxon>
        <taxon>Vertebrata</taxon>
        <taxon>Euteleostomi</taxon>
        <taxon>Mammalia</taxon>
        <taxon>Eutheria</taxon>
        <taxon>Euarchontoglires</taxon>
        <taxon>Primates</taxon>
        <taxon>Haplorrhini</taxon>
        <taxon>Catarrhini</taxon>
        <taxon>Hominidae</taxon>
        <taxon>Homo</taxon>
    </lineage>
</organism>
<feature type="chain" id="PRO_0000068880" description="Ras-specific guanine nucleotide-releasing factor 1">
    <location>
        <begin position="1"/>
        <end position="1273"/>
    </location>
</feature>
<feature type="domain" description="PH 1" evidence="7">
    <location>
        <begin position="22"/>
        <end position="129"/>
    </location>
</feature>
<feature type="domain" description="IQ" evidence="5">
    <location>
        <begin position="204"/>
        <end position="229"/>
    </location>
</feature>
<feature type="domain" description="DH" evidence="4">
    <location>
        <begin position="240"/>
        <end position="426"/>
    </location>
</feature>
<feature type="domain" description="PH 2" evidence="7">
    <location>
        <begin position="467"/>
        <end position="584"/>
    </location>
</feature>
<feature type="domain" description="N-terminal Ras-GEF" evidence="6">
    <location>
        <begin position="644"/>
        <end position="761"/>
    </location>
</feature>
<feature type="domain" description="Ras-GEF" evidence="8">
    <location>
        <begin position="1038"/>
        <end position="1270"/>
    </location>
</feature>
<feature type="region of interest" description="Disordered" evidence="9">
    <location>
        <begin position="724"/>
        <end position="754"/>
    </location>
</feature>
<feature type="region of interest" description="Disordered" evidence="9">
    <location>
        <begin position="809"/>
        <end position="874"/>
    </location>
</feature>
<feature type="compositionally biased region" description="Acidic residues" evidence="9">
    <location>
        <begin position="842"/>
        <end position="854"/>
    </location>
</feature>
<feature type="compositionally biased region" description="Low complexity" evidence="9">
    <location>
        <begin position="855"/>
        <end position="867"/>
    </location>
</feature>
<feature type="modified residue" description="Phosphoserine; by PLK2" evidence="3">
    <location>
        <position position="577"/>
    </location>
</feature>
<feature type="modified residue" description="Phosphoserine; by PLK2" evidence="3">
    <location>
        <position position="626"/>
    </location>
</feature>
<feature type="modified residue" description="Phosphoserine" evidence="2">
    <location>
        <position position="758"/>
    </location>
</feature>
<feature type="modified residue" description="Phosphoserine; by PLK2" evidence="3">
    <location>
        <position position="779"/>
    </location>
</feature>
<feature type="modified residue" description="Phosphoserine; by PLK2" evidence="3">
    <location>
        <position position="800"/>
    </location>
</feature>
<feature type="splice variant" id="VSP_012032" description="In isoform 2." evidence="12">
    <location>
        <begin position="1"/>
        <end position="784"/>
    </location>
</feature>
<feature type="splice variant" id="VSP_054072" description="In isoform 3." evidence="11">
    <location>
        <begin position="610"/>
        <end position="622"/>
    </location>
</feature>
<feature type="splice variant" id="VSP_054073" description="In isoform 3." evidence="11">
    <location>
        <begin position="705"/>
        <end position="707"/>
    </location>
</feature>
<feature type="sequence conflict" description="In Ref. 6; M91815." evidence="13" ref="6">
    <original>V</original>
    <variation>A</variation>
    <location>
        <position position="1053"/>
    </location>
</feature>
<feature type="sequence conflict" description="In Ref. 6; M91815." evidence="13" ref="6">
    <original>E</original>
    <variation>G</variation>
    <location>
        <position position="1111"/>
    </location>
</feature>
<feature type="sequence conflict" description="In Ref. 6; M91815." evidence="13" ref="6">
    <original>S</original>
    <variation>C</variation>
    <location>
        <position position="1134"/>
    </location>
</feature>